<reference key="1">
    <citation type="submission" date="2004-11" db="EMBL/GenBank/DDBJ databases">
        <authorList>
            <consortium name="The German cDNA consortium"/>
        </authorList>
    </citation>
    <scope>NUCLEOTIDE SEQUENCE [LARGE SCALE MRNA]</scope>
    <source>
        <tissue>Heart</tissue>
    </source>
</reference>
<evidence type="ECO:0000250" key="1"/>
<evidence type="ECO:0000255" key="2"/>
<evidence type="ECO:0000305" key="3"/>
<dbReference type="EMBL" id="CR858135">
    <property type="protein sequence ID" value="CAH90374.1"/>
    <property type="molecule type" value="mRNA"/>
</dbReference>
<dbReference type="RefSeq" id="NP_001127278.1">
    <property type="nucleotide sequence ID" value="NM_001133806.1"/>
</dbReference>
<dbReference type="SMR" id="Q5RCY3"/>
<dbReference type="FunCoup" id="Q5RCY3">
    <property type="interactions" value="830"/>
</dbReference>
<dbReference type="STRING" id="9601.ENSPPYP00000004929"/>
<dbReference type="GlyCosmos" id="Q5RCY3">
    <property type="glycosylation" value="2 sites, No reported glycans"/>
</dbReference>
<dbReference type="GeneID" id="100174335"/>
<dbReference type="CTD" id="2012"/>
<dbReference type="InParanoid" id="Q5RCY3"/>
<dbReference type="OrthoDB" id="8678517at2759"/>
<dbReference type="Proteomes" id="UP000001595">
    <property type="component" value="Unplaced"/>
</dbReference>
<dbReference type="GO" id="GO:0005886">
    <property type="term" value="C:plasma membrane"/>
    <property type="evidence" value="ECO:0007669"/>
    <property type="project" value="TreeGrafter"/>
</dbReference>
<dbReference type="FunFam" id="1.20.140.150:FF:000026">
    <property type="entry name" value="Epithelial membrane protein 1"/>
    <property type="match status" value="1"/>
</dbReference>
<dbReference type="Gene3D" id="1.20.140.150">
    <property type="match status" value="1"/>
</dbReference>
<dbReference type="InterPro" id="IPR003932">
    <property type="entry name" value="EMP_1"/>
</dbReference>
<dbReference type="InterPro" id="IPR050579">
    <property type="entry name" value="PMP-22/EMP/MP20-like"/>
</dbReference>
<dbReference type="InterPro" id="IPR004031">
    <property type="entry name" value="PMP22/EMP/MP20/Claudin"/>
</dbReference>
<dbReference type="InterPro" id="IPR004032">
    <property type="entry name" value="PMP22_EMP_MP20"/>
</dbReference>
<dbReference type="PANTHER" id="PTHR10671:SF6">
    <property type="entry name" value="EPITHELIAL MEMBRANE PROTEIN 1"/>
    <property type="match status" value="1"/>
</dbReference>
<dbReference type="PANTHER" id="PTHR10671">
    <property type="entry name" value="EPITHELIAL MEMBRANE PROTEIN-RELATED"/>
    <property type="match status" value="1"/>
</dbReference>
<dbReference type="Pfam" id="PF00822">
    <property type="entry name" value="PMP22_Claudin"/>
    <property type="match status" value="1"/>
</dbReference>
<dbReference type="PRINTS" id="PR01453">
    <property type="entry name" value="EPMEMFAMILY"/>
</dbReference>
<dbReference type="PRINTS" id="PR01454">
    <property type="entry name" value="EPMEMPROT1"/>
</dbReference>
<dbReference type="PROSITE" id="PS01221">
    <property type="entry name" value="PMP22_1"/>
    <property type="match status" value="1"/>
</dbReference>
<dbReference type="PROSITE" id="PS01222">
    <property type="entry name" value="PMP22_2"/>
    <property type="match status" value="1"/>
</dbReference>
<sequence>MLVLLAGIFVVHIATVIMLFVSTIANVWLVSNTVDASVGLWKNCTNISCSDSLSYASEDALKTVQAFMILSIIFCVIALLVFVFQLFTMEKGNRFFLSGATTLVCWLCILVGVSIYTSHYANRDGTQYHHGYSYILGWICFCFSFIIGVLYLVLRKK</sequence>
<feature type="chain" id="PRO_0000164655" description="Epithelial membrane protein 1">
    <location>
        <begin position="1"/>
        <end position="157"/>
    </location>
</feature>
<feature type="transmembrane region" description="Helical" evidence="2">
    <location>
        <begin position="1"/>
        <end position="21"/>
    </location>
</feature>
<feature type="transmembrane region" description="Helical" evidence="2">
    <location>
        <begin position="67"/>
        <end position="87"/>
    </location>
</feature>
<feature type="transmembrane region" description="Helical" evidence="2">
    <location>
        <begin position="95"/>
        <end position="115"/>
    </location>
</feature>
<feature type="transmembrane region" description="Helical" evidence="2">
    <location>
        <begin position="134"/>
        <end position="154"/>
    </location>
</feature>
<feature type="glycosylation site" description="N-linked (GlcNAc...) asparagine" evidence="2">
    <location>
        <position position="43"/>
    </location>
</feature>
<feature type="glycosylation site" description="N-linked (GlcNAc...) asparagine" evidence="2">
    <location>
        <position position="46"/>
    </location>
</feature>
<gene>
    <name type="primary">EMP1</name>
</gene>
<protein>
    <recommendedName>
        <fullName>Epithelial membrane protein 1</fullName>
        <shortName>EMP-1</shortName>
    </recommendedName>
</protein>
<comment type="subcellular location">
    <subcellularLocation>
        <location evidence="1">Membrane</location>
        <topology evidence="1">Multi-pass membrane protein</topology>
    </subcellularLocation>
</comment>
<comment type="similarity">
    <text evidence="3">Belongs to the PMP-22/EMP/MP20 family.</text>
</comment>
<proteinExistence type="evidence at transcript level"/>
<accession>Q5RCY3</accession>
<organism>
    <name type="scientific">Pongo abelii</name>
    <name type="common">Sumatran orangutan</name>
    <name type="synonym">Pongo pygmaeus abelii</name>
    <dbReference type="NCBI Taxonomy" id="9601"/>
    <lineage>
        <taxon>Eukaryota</taxon>
        <taxon>Metazoa</taxon>
        <taxon>Chordata</taxon>
        <taxon>Craniata</taxon>
        <taxon>Vertebrata</taxon>
        <taxon>Euteleostomi</taxon>
        <taxon>Mammalia</taxon>
        <taxon>Eutheria</taxon>
        <taxon>Euarchontoglires</taxon>
        <taxon>Primates</taxon>
        <taxon>Haplorrhini</taxon>
        <taxon>Catarrhini</taxon>
        <taxon>Hominidae</taxon>
        <taxon>Pongo</taxon>
    </lineage>
</organism>
<name>EMP1_PONAB</name>
<keyword id="KW-0325">Glycoprotein</keyword>
<keyword id="KW-0472">Membrane</keyword>
<keyword id="KW-1185">Reference proteome</keyword>
<keyword id="KW-0812">Transmembrane</keyword>
<keyword id="KW-1133">Transmembrane helix</keyword>